<sequence>MSSLKHQLKTYHIPFDDQMLERLERYTALLLEWNRAHNLTGAKNSQEVEEHLIDSLYPLRFLPPFDSCADIGTGAGFPGLILAIALPKSHFDLIEPLKKRVAFLHYCVMELGLSNVSIHAKRIEALTLEAPDLITSRAVTSTQTLLSLARPLIAPHTSILFYKGERVLGEIQEEEGYTITPFKQRRYLFKQGV</sequence>
<protein>
    <recommendedName>
        <fullName evidence="1">Ribosomal RNA small subunit methyltransferase G</fullName>
        <ecNumber evidence="1">2.1.1.170</ecNumber>
    </recommendedName>
    <alternativeName>
        <fullName evidence="1">16S rRNA 7-methylguanosine methyltransferase</fullName>
        <shortName evidence="1">16S rRNA m7G methyltransferase</shortName>
    </alternativeName>
</protein>
<organism>
    <name type="scientific">Wolinella succinogenes (strain ATCC 29543 / DSM 1740 / CCUG 13145 / JCM 31913 / LMG 7466 / NCTC 11488 / FDC 602W)</name>
    <name type="common">Vibrio succinogenes</name>
    <dbReference type="NCBI Taxonomy" id="273121"/>
    <lineage>
        <taxon>Bacteria</taxon>
        <taxon>Pseudomonadati</taxon>
        <taxon>Campylobacterota</taxon>
        <taxon>Epsilonproteobacteria</taxon>
        <taxon>Campylobacterales</taxon>
        <taxon>Helicobacteraceae</taxon>
        <taxon>Wolinella</taxon>
    </lineage>
</organism>
<reference key="1">
    <citation type="journal article" date="2003" name="Proc. Natl. Acad. Sci. U.S.A.">
        <title>Complete genome sequence and analysis of Wolinella succinogenes.</title>
        <authorList>
            <person name="Baar C."/>
            <person name="Eppinger M."/>
            <person name="Raddatz G."/>
            <person name="Simon J."/>
            <person name="Lanz C."/>
            <person name="Klimmek O."/>
            <person name="Nandakumar R."/>
            <person name="Gross R."/>
            <person name="Rosinus A."/>
            <person name="Keller H."/>
            <person name="Jagtap P."/>
            <person name="Linke B."/>
            <person name="Meyer F."/>
            <person name="Lederer H."/>
            <person name="Schuster S.C."/>
        </authorList>
    </citation>
    <scope>NUCLEOTIDE SEQUENCE [LARGE SCALE GENOMIC DNA]</scope>
    <source>
        <strain>ATCC 29543 / DSM 1740 / CCUG 13145 / JCM 31913 / LMG 7466 / NCTC 11488 / FDC 602W</strain>
    </source>
</reference>
<proteinExistence type="inferred from homology"/>
<comment type="function">
    <text evidence="1">Specifically methylates the N7 position of guanine in position 527 of 16S rRNA.</text>
</comment>
<comment type="catalytic activity">
    <reaction evidence="1">
        <text>guanosine(527) in 16S rRNA + S-adenosyl-L-methionine = N(7)-methylguanosine(527) in 16S rRNA + S-adenosyl-L-homocysteine</text>
        <dbReference type="Rhea" id="RHEA:42732"/>
        <dbReference type="Rhea" id="RHEA-COMP:10209"/>
        <dbReference type="Rhea" id="RHEA-COMP:10210"/>
        <dbReference type="ChEBI" id="CHEBI:57856"/>
        <dbReference type="ChEBI" id="CHEBI:59789"/>
        <dbReference type="ChEBI" id="CHEBI:74269"/>
        <dbReference type="ChEBI" id="CHEBI:74480"/>
        <dbReference type="EC" id="2.1.1.170"/>
    </reaction>
</comment>
<comment type="subcellular location">
    <subcellularLocation>
        <location evidence="1">Cytoplasm</location>
    </subcellularLocation>
</comment>
<comment type="similarity">
    <text evidence="1">Belongs to the methyltransferase superfamily. RNA methyltransferase RsmG family.</text>
</comment>
<dbReference type="EC" id="2.1.1.170" evidence="1"/>
<dbReference type="EMBL" id="BX571659">
    <property type="protein sequence ID" value="CAE09976.1"/>
    <property type="molecule type" value="Genomic_DNA"/>
</dbReference>
<dbReference type="RefSeq" id="WP_011138773.1">
    <property type="nucleotide sequence ID" value="NC_005090.1"/>
</dbReference>
<dbReference type="SMR" id="Q7M9J8"/>
<dbReference type="STRING" id="273121.WS0867"/>
<dbReference type="KEGG" id="wsu:WS0867"/>
<dbReference type="eggNOG" id="COG0357">
    <property type="taxonomic scope" value="Bacteria"/>
</dbReference>
<dbReference type="HOGENOM" id="CLU_065341_2_1_7"/>
<dbReference type="Proteomes" id="UP000000422">
    <property type="component" value="Chromosome"/>
</dbReference>
<dbReference type="GO" id="GO:0005829">
    <property type="term" value="C:cytosol"/>
    <property type="evidence" value="ECO:0007669"/>
    <property type="project" value="TreeGrafter"/>
</dbReference>
<dbReference type="GO" id="GO:0070043">
    <property type="term" value="F:rRNA (guanine-N7-)-methyltransferase activity"/>
    <property type="evidence" value="ECO:0007669"/>
    <property type="project" value="UniProtKB-UniRule"/>
</dbReference>
<dbReference type="Gene3D" id="3.40.50.150">
    <property type="entry name" value="Vaccinia Virus protein VP39"/>
    <property type="match status" value="1"/>
</dbReference>
<dbReference type="HAMAP" id="MF_00074">
    <property type="entry name" value="16SrRNA_methyltr_G"/>
    <property type="match status" value="1"/>
</dbReference>
<dbReference type="InterPro" id="IPR003682">
    <property type="entry name" value="rRNA_ssu_MeTfrase_G"/>
</dbReference>
<dbReference type="InterPro" id="IPR029063">
    <property type="entry name" value="SAM-dependent_MTases_sf"/>
</dbReference>
<dbReference type="NCBIfam" id="TIGR00138">
    <property type="entry name" value="rsmG_gidB"/>
    <property type="match status" value="1"/>
</dbReference>
<dbReference type="PANTHER" id="PTHR31760">
    <property type="entry name" value="S-ADENOSYL-L-METHIONINE-DEPENDENT METHYLTRANSFERASES SUPERFAMILY PROTEIN"/>
    <property type="match status" value="1"/>
</dbReference>
<dbReference type="PANTHER" id="PTHR31760:SF0">
    <property type="entry name" value="S-ADENOSYL-L-METHIONINE-DEPENDENT METHYLTRANSFERASES SUPERFAMILY PROTEIN"/>
    <property type="match status" value="1"/>
</dbReference>
<dbReference type="Pfam" id="PF02527">
    <property type="entry name" value="GidB"/>
    <property type="match status" value="1"/>
</dbReference>
<dbReference type="PIRSF" id="PIRSF003078">
    <property type="entry name" value="GidB"/>
    <property type="match status" value="1"/>
</dbReference>
<dbReference type="SUPFAM" id="SSF53335">
    <property type="entry name" value="S-adenosyl-L-methionine-dependent methyltransferases"/>
    <property type="match status" value="1"/>
</dbReference>
<gene>
    <name evidence="1" type="primary">rsmG</name>
    <name type="ordered locus">WS0867</name>
</gene>
<accession>Q7M9J8</accession>
<feature type="chain" id="PRO_0000184367" description="Ribosomal RNA small subunit methyltransferase G">
    <location>
        <begin position="1"/>
        <end position="193"/>
    </location>
</feature>
<feature type="binding site" evidence="1">
    <location>
        <position position="72"/>
    </location>
    <ligand>
        <name>S-adenosyl-L-methionine</name>
        <dbReference type="ChEBI" id="CHEBI:59789"/>
    </ligand>
</feature>
<feature type="binding site" evidence="1">
    <location>
        <position position="77"/>
    </location>
    <ligand>
        <name>S-adenosyl-L-methionine</name>
        <dbReference type="ChEBI" id="CHEBI:59789"/>
    </ligand>
</feature>
<feature type="binding site" evidence="1">
    <location>
        <begin position="123"/>
        <end position="124"/>
    </location>
    <ligand>
        <name>S-adenosyl-L-methionine</name>
        <dbReference type="ChEBI" id="CHEBI:59789"/>
    </ligand>
</feature>
<feature type="binding site" evidence="1">
    <location>
        <position position="137"/>
    </location>
    <ligand>
        <name>S-adenosyl-L-methionine</name>
        <dbReference type="ChEBI" id="CHEBI:59789"/>
    </ligand>
</feature>
<evidence type="ECO:0000255" key="1">
    <source>
        <dbReference type="HAMAP-Rule" id="MF_00074"/>
    </source>
</evidence>
<keyword id="KW-0963">Cytoplasm</keyword>
<keyword id="KW-0489">Methyltransferase</keyword>
<keyword id="KW-1185">Reference proteome</keyword>
<keyword id="KW-0698">rRNA processing</keyword>
<keyword id="KW-0949">S-adenosyl-L-methionine</keyword>
<keyword id="KW-0808">Transferase</keyword>
<name>RSMG_WOLSU</name>